<organism>
    <name type="scientific">Rattus norvegicus</name>
    <name type="common">Rat</name>
    <dbReference type="NCBI Taxonomy" id="10116"/>
    <lineage>
        <taxon>Eukaryota</taxon>
        <taxon>Metazoa</taxon>
        <taxon>Chordata</taxon>
        <taxon>Craniata</taxon>
        <taxon>Vertebrata</taxon>
        <taxon>Euteleostomi</taxon>
        <taxon>Mammalia</taxon>
        <taxon>Eutheria</taxon>
        <taxon>Euarchontoglires</taxon>
        <taxon>Glires</taxon>
        <taxon>Rodentia</taxon>
        <taxon>Myomorpha</taxon>
        <taxon>Muroidea</taxon>
        <taxon>Muridae</taxon>
        <taxon>Murinae</taxon>
        <taxon>Rattus</taxon>
    </lineage>
</organism>
<evidence type="ECO:0000250" key="1">
    <source>
        <dbReference type="UniProtKB" id="P42292"/>
    </source>
</evidence>
<evidence type="ECO:0000250" key="2">
    <source>
        <dbReference type="UniProtKB" id="Q13740"/>
    </source>
</evidence>
<evidence type="ECO:0000250" key="3">
    <source>
        <dbReference type="UniProtKB" id="Q61490"/>
    </source>
</evidence>
<evidence type="ECO:0000255" key="4"/>
<evidence type="ECO:0000255" key="5">
    <source>
        <dbReference type="PROSITE-ProRule" id="PRU00114"/>
    </source>
</evidence>
<evidence type="ECO:0000256" key="6">
    <source>
        <dbReference type="SAM" id="MobiDB-lite"/>
    </source>
</evidence>
<evidence type="ECO:0000303" key="7">
    <source>
    </source>
</evidence>
<evidence type="ECO:0000303" key="8">
    <source>
    </source>
</evidence>
<evidence type="ECO:0000303" key="9">
    <source>
    </source>
</evidence>
<evidence type="ECO:0000305" key="10"/>
<evidence type="ECO:0007744" key="11">
    <source>
    </source>
</evidence>
<reference key="1">
    <citation type="journal article" date="1997" name="J. Biol. Chem.">
        <title>Cloning and characterization of HB2, a candidate high density lipoprotein receptor. Sequence homology with members of the immunoglobulin superfamily of membrane proteins.</title>
        <authorList>
            <person name="Matsumoto A."/>
            <person name="Mitchell A."/>
            <person name="Kurata H."/>
            <person name="Pyle L."/>
            <person name="Kondo K."/>
            <person name="Itakura H."/>
            <person name="Fidge N."/>
        </authorList>
    </citation>
    <scope>NUCLEOTIDE SEQUENCE [MRNA]</scope>
    <scope>PARTIAL PROTEIN SEQUENCE</scope>
</reference>
<reference key="2">
    <citation type="journal article" date="2004" name="Genome Res.">
        <title>The status, quality, and expansion of the NIH full-length cDNA project: the Mammalian Gene Collection (MGC).</title>
        <authorList>
            <consortium name="The MGC Project Team"/>
        </authorList>
    </citation>
    <scope>NUCLEOTIDE SEQUENCE [LARGE SCALE MRNA]</scope>
    <source>
        <tissue>Prostate</tissue>
    </source>
</reference>
<reference key="3">
    <citation type="journal article" date="1994" name="Brain Res.">
        <title>Distribution and characteristics of a 90 kDa protein, KG-CAM, in the rat CNS.</title>
        <authorList>
            <person name="Peduzzi J.D."/>
            <person name="Irwin M.H."/>
            <person name="Geisert E.E. Jr."/>
        </authorList>
    </citation>
    <scope>PROTEIN SEQUENCE OF 29-38</scope>
</reference>
<reference key="4">
    <citation type="submission" date="2007-09" db="UniProtKB">
        <authorList>
            <person name="Lubec G."/>
            <person name="Kang S.U."/>
            <person name="Lubec S."/>
        </authorList>
    </citation>
    <scope>PROTEIN SEQUENCE OF 45-55; 58-71; 77-87; 111-129; 143-152; 154-160; 176-189; 306-312 AND 406-423</scope>
    <scope>IDENTIFICATION BY MASS SPECTROMETRY</scope>
    <source>
        <strain>Sprague-Dawley</strain>
        <tissue>Brain</tissue>
    </source>
</reference>
<reference key="5">
    <citation type="journal article" date="1998" name="J. Bone Miner. Res.">
        <title>Mesenchymal stem cell surface antigen SB-10 corresponds to activated leukocyte cell adhesion molecule and is involved in osteogenic differentiation.</title>
        <authorList>
            <person name="Bruder S.P."/>
            <person name="Ricalton N.S."/>
            <person name="Boynton R.E."/>
            <person name="Connolly T.J."/>
            <person name="Jaiswal N."/>
            <person name="Zaia J."/>
            <person name="Barry F.P."/>
        </authorList>
    </citation>
    <scope>NUCLEOTIDE SEQUENCE [MRNA] OF 94-156 AND 270-361</scope>
    <source>
        <tissue>Mesenchymal cell</tissue>
    </source>
</reference>
<reference key="6">
    <citation type="journal article" date="2013" name="J. Proteome Res.">
        <title>Site-specific glycan-peptide analysis for determination of N-glycoproteome heterogeneity.</title>
        <authorList>
            <person name="Parker B.L."/>
            <person name="Thaysen-Andersen M."/>
            <person name="Solis N."/>
            <person name="Scott N.E."/>
            <person name="Larsen M.R."/>
            <person name="Graham M.E."/>
            <person name="Packer N.H."/>
            <person name="Cordwell S.J."/>
        </authorList>
    </citation>
    <scope>GLYCOSYLATION [LARGE SCALE ANALYSIS] AT ASN-167</scope>
    <scope>IDENTIFICATION BY MASS SPECTROMETRY [LARGE SCALE ANALYSIS]</scope>
    <source>
        <tissue>Brain</tissue>
    </source>
</reference>
<keyword id="KW-1064">Adaptive immunity</keyword>
<keyword id="KW-0130">Cell adhesion</keyword>
<keyword id="KW-1003">Cell membrane</keyword>
<keyword id="KW-0966">Cell projection</keyword>
<keyword id="KW-0903">Direct protein sequencing</keyword>
<keyword id="KW-1015">Disulfide bond</keyword>
<keyword id="KW-0325">Glycoprotein</keyword>
<keyword id="KW-0391">Immunity</keyword>
<keyword id="KW-0393">Immunoglobulin domain</keyword>
<keyword id="KW-0472">Membrane</keyword>
<keyword id="KW-1185">Reference proteome</keyword>
<keyword id="KW-0677">Repeat</keyword>
<keyword id="KW-0732">Signal</keyword>
<keyword id="KW-0812">Transmembrane</keyword>
<keyword id="KW-1133">Transmembrane helix</keyword>
<name>CD166_RAT</name>
<sequence length="583" mass="65022">MASKGSPSCRLVFCLLISAAVLRPGLGWYTVNSAYGDTIVMPCRLDVPQNLMFGKWKYEKPDGSPVFIAFRSSTKKSVQYDDVPEYKDRLSLSENYTLSINNAKISDEKRFVCMLVTEDNVFEAPTLVKVFKQPSKPEIVNRAAFLETEQLKKLGDCISRDSYPDGNITWYRNGKVLQPVDGEVSILFKKEIDPGTQLYTMTSSLEYKTTKSDIQMPFTCSVTYYGPSGQKTIYSEQAIFDIYYPTEQVTIQVLPPKNAIKEGDNITLQCLGNGNPPPEEFMFYLPGQAEGIRSSNTYTLTDVRRNATGDYKCSLIDQRNMAASTTITVHYLDLSLNPSGEVTKQIGDTLPVSCTISASRNATVVWMKDNIRLRSSPSFSSLHYQDAGNYVCETALQEVEGLKKRESLTLIVEGKPQIKMTKKTDPSGLSKTIICHVEGFPKPAIQWTITGSGSVINQTEESPYINGRYYSKIIISPEENVTLTCTAENQLERTVNSLNVSAISIPEHDEADDISDENREKVNDQAKLIVGIVVGLLLAALVAGVVYWLYMKKSKTASKHVNKDLGNMEENKKLEENNHKTEA</sequence>
<accession>O35112</accession>
<accession>O55172</accession>
<protein>
    <recommendedName>
        <fullName>CD166 antigen</fullName>
    </recommendedName>
    <alternativeName>
        <fullName>Activated leukocyte cell adhesion molecule</fullName>
    </alternativeName>
    <alternativeName>
        <fullName evidence="8">HB2</fullName>
    </alternativeName>
    <alternativeName>
        <fullName evidence="7">KG-CAM</fullName>
    </alternativeName>
    <alternativeName>
        <fullName>Protein MEMD</fullName>
    </alternativeName>
    <alternativeName>
        <fullName evidence="9">SB-10 antigen</fullName>
    </alternativeName>
    <cdAntigenName>CD166</cdAntigenName>
</protein>
<gene>
    <name type="primary">Alcam</name>
</gene>
<comment type="function">
    <text evidence="1 2 3">Cell adhesion molecule that mediates both heterotypic cell-cell contacts via its interaction with CD6, as well as homotypic cell-cell contacts. Promotes T-cell activation and proliferation via its interactions with CD6 (By similarity). Contributes to the formation and maturation of the immunological synapse via its interactions with CD6 (By similarity). Mediates homotypic interactions with cells that express ALCAM. Mediates attachment of dendritic cells onto endothelial cells via homotypic interaction. Inhibits endothelial cell migration and promotes endothelial tube formation via homotypic interactions. Required for normal organization of the lymph vessel network. Required for normal hematopoietic stem cell engraftment in the bone marrow. Plays a role in hematopoiesis; required for normal numbers of hematopoietic stem cells in bone marrow. Promotes in vitro osteoblast proliferation and differentiation (By similarity). Promotes neurite extension, axon growth and axon guidance; axons grow preferentially on surfaces that contain ALCAM (By similarity). Mediates outgrowth and pathfinding for retinal ganglion cell axons (By similarity).</text>
</comment>
<comment type="subunit">
    <text evidence="2">Homodimer. Interacts (via extracellular domain) with CD6 (via extracellular domain). Homodimerization and interaction with CD6 involve the same region and cannot occur simultaneously. The affinity for CD6 is much higher than the affinity for self-association. Interacts (via glycosylated extracellular domain) with LGALS1 and LGALS3. Interaction with LGALS1 or LGALS3 inhibits interaction with CD6.</text>
</comment>
<comment type="subcellular location">
    <subcellularLocation>
        <location evidence="3">Cell membrane</location>
        <topology evidence="3">Single-pass type I membrane protein</topology>
    </subcellularLocation>
    <subcellularLocation>
        <location evidence="3">Cell projection</location>
        <location evidence="3">Axon</location>
    </subcellularLocation>
    <subcellularLocation>
        <location evidence="3">Cell projection</location>
        <location evidence="3">Dendrite</location>
    </subcellularLocation>
    <text evidence="2">Detected at the immunological synapse, i.e, at the contact zone between antigen-presenting dendritic cells and T-cells. Colocalizes with CD6 and the TCR/CD3 complex at the immunological synapse.</text>
</comment>
<comment type="tissue specificity">
    <text>Strongest expression in the lung, then brain, liver, and kidney. Present in the somatosensory system, basal ganglia, cortex, olfactory system, and circumventricular organs.</text>
</comment>
<comment type="domain">
    <text evidence="2">The CD6 binding site is located in the N-terminal Ig-like domain.</text>
</comment>
<comment type="PTM">
    <text>The N-terminus is blocked.</text>
</comment>
<comment type="PTM">
    <text evidence="2">Glycosylated.</text>
</comment>
<feature type="signal peptide" evidence="4">
    <location>
        <begin position="1"/>
        <end position="27"/>
    </location>
</feature>
<feature type="chain" id="PRO_0000014661" description="CD166 antigen">
    <location>
        <begin position="28"/>
        <end position="583"/>
    </location>
</feature>
<feature type="topological domain" description="Extracellular" evidence="4">
    <location>
        <begin position="28"/>
        <end position="527"/>
    </location>
</feature>
<feature type="transmembrane region" description="Helical" evidence="4">
    <location>
        <begin position="528"/>
        <end position="549"/>
    </location>
</feature>
<feature type="topological domain" description="Cytoplasmic" evidence="4">
    <location>
        <begin position="550"/>
        <end position="583"/>
    </location>
</feature>
<feature type="domain" description="Ig-like V-type 1">
    <location>
        <begin position="28"/>
        <end position="120"/>
    </location>
</feature>
<feature type="domain" description="Ig-like V-type 2">
    <location>
        <begin position="125"/>
        <end position="234"/>
    </location>
</feature>
<feature type="domain" description="Ig-like C2-type 1">
    <location>
        <begin position="245"/>
        <end position="328"/>
    </location>
</feature>
<feature type="domain" description="Ig-like C2-type 2">
    <location>
        <begin position="333"/>
        <end position="409"/>
    </location>
</feature>
<feature type="domain" description="Ig-like C2-type 3">
    <location>
        <begin position="416"/>
        <end position="501"/>
    </location>
</feature>
<feature type="region of interest" description="Disordered" evidence="6">
    <location>
        <begin position="562"/>
        <end position="583"/>
    </location>
</feature>
<feature type="compositionally biased region" description="Basic and acidic residues" evidence="6">
    <location>
        <begin position="569"/>
        <end position="583"/>
    </location>
</feature>
<feature type="glycosylation site" description="N-linked (GlcNAc...) asparagine" evidence="4">
    <location>
        <position position="95"/>
    </location>
</feature>
<feature type="glycosylation site" description="N-linked (GlcNAc...) asparagine" evidence="11">
    <location>
        <position position="167"/>
    </location>
</feature>
<feature type="glycosylation site" description="N-linked (GlcNAc...) asparagine" evidence="4">
    <location>
        <position position="265"/>
    </location>
</feature>
<feature type="glycosylation site" description="N-linked (GlcNAc...) asparagine" evidence="4">
    <location>
        <position position="306"/>
    </location>
</feature>
<feature type="glycosylation site" description="N-linked (GlcNAc...) asparagine" evidence="4">
    <location>
        <position position="361"/>
    </location>
</feature>
<feature type="glycosylation site" description="N-linked (GlcNAc...) asparagine" evidence="4">
    <location>
        <position position="457"/>
    </location>
</feature>
<feature type="glycosylation site" description="N-linked (GlcNAc...) asparagine" evidence="4">
    <location>
        <position position="480"/>
    </location>
</feature>
<feature type="glycosylation site" description="N-linked (GlcNAc...) asparagine" evidence="4">
    <location>
        <position position="499"/>
    </location>
</feature>
<feature type="disulfide bond" evidence="5">
    <location>
        <begin position="43"/>
        <end position="113"/>
    </location>
</feature>
<feature type="disulfide bond" evidence="5">
    <location>
        <begin position="157"/>
        <end position="220"/>
    </location>
</feature>
<feature type="disulfide bond" evidence="5">
    <location>
        <begin position="270"/>
        <end position="313"/>
    </location>
</feature>
<feature type="disulfide bond" evidence="5">
    <location>
        <begin position="354"/>
        <end position="392"/>
    </location>
</feature>
<feature type="disulfide bond" evidence="5">
    <location>
        <begin position="435"/>
        <end position="485"/>
    </location>
</feature>
<feature type="sequence conflict" description="In Ref. 5; CAA73693." evidence="10" ref="5">
    <original>S</original>
    <variation>G</variation>
    <location>
        <position position="339"/>
    </location>
</feature>
<dbReference type="EMBL" id="AB008538">
    <property type="protein sequence ID" value="BAA23279.1"/>
    <property type="molecule type" value="mRNA"/>
</dbReference>
<dbReference type="EMBL" id="BC061970">
    <property type="protein sequence ID" value="AAH61970.1"/>
    <property type="molecule type" value="mRNA"/>
</dbReference>
<dbReference type="EMBL" id="Y13240">
    <property type="protein sequence ID" value="CAA73692.1"/>
    <property type="molecule type" value="mRNA"/>
</dbReference>
<dbReference type="EMBL" id="Y13241">
    <property type="protein sequence ID" value="CAA73693.1"/>
    <property type="molecule type" value="mRNA"/>
</dbReference>
<dbReference type="RefSeq" id="NP_113941.1">
    <property type="nucleotide sequence ID" value="NM_031753.3"/>
</dbReference>
<dbReference type="SMR" id="O35112"/>
<dbReference type="FunCoup" id="O35112">
    <property type="interactions" value="800"/>
</dbReference>
<dbReference type="STRING" id="10116.ENSRNOP00000002738"/>
<dbReference type="GlyCosmos" id="O35112">
    <property type="glycosylation" value="8 sites, 4 glycans"/>
</dbReference>
<dbReference type="GlyGen" id="O35112">
    <property type="glycosylation" value="8 sites, 4 N-linked glycans (3 sites), 1 N-linked;o-linked glycan (1 site)"/>
</dbReference>
<dbReference type="iPTMnet" id="O35112"/>
<dbReference type="PhosphoSitePlus" id="O35112"/>
<dbReference type="SwissPalm" id="O35112"/>
<dbReference type="PaxDb" id="10116-ENSRNOP00000002738"/>
<dbReference type="GeneID" id="79559"/>
<dbReference type="KEGG" id="rno:79559"/>
<dbReference type="UCSC" id="RGD:619972">
    <property type="organism name" value="rat"/>
</dbReference>
<dbReference type="AGR" id="RGD:619972"/>
<dbReference type="CTD" id="214"/>
<dbReference type="RGD" id="619972">
    <property type="gene designation" value="Alcam"/>
</dbReference>
<dbReference type="VEuPathDB" id="HostDB:ENSRNOG00000001989"/>
<dbReference type="eggNOG" id="ENOG502RMQM">
    <property type="taxonomic scope" value="Eukaryota"/>
</dbReference>
<dbReference type="HOGENOM" id="CLU_028888_2_0_1"/>
<dbReference type="InParanoid" id="O35112"/>
<dbReference type="OrthoDB" id="33280at9989"/>
<dbReference type="PhylomeDB" id="O35112"/>
<dbReference type="TreeFam" id="TF321859"/>
<dbReference type="PRO" id="PR:O35112"/>
<dbReference type="Proteomes" id="UP000002494">
    <property type="component" value="Chromosome 11"/>
</dbReference>
<dbReference type="Bgee" id="ENSRNOG00000001989">
    <property type="expression patterns" value="Expressed in Ammon's horn and 20 other cell types or tissues"/>
</dbReference>
<dbReference type="GO" id="GO:0030424">
    <property type="term" value="C:axon"/>
    <property type="evidence" value="ECO:0000250"/>
    <property type="project" value="UniProtKB"/>
</dbReference>
<dbReference type="GO" id="GO:0030425">
    <property type="term" value="C:dendrite"/>
    <property type="evidence" value="ECO:0007669"/>
    <property type="project" value="UniProtKB-SubCell"/>
</dbReference>
<dbReference type="GO" id="GO:0009897">
    <property type="term" value="C:external side of plasma membrane"/>
    <property type="evidence" value="ECO:0000266"/>
    <property type="project" value="RGD"/>
</dbReference>
<dbReference type="GO" id="GO:0001772">
    <property type="term" value="C:immunological synapse"/>
    <property type="evidence" value="ECO:0000250"/>
    <property type="project" value="UniProtKB"/>
</dbReference>
<dbReference type="GO" id="GO:0043025">
    <property type="term" value="C:neuronal cell body"/>
    <property type="evidence" value="ECO:0000266"/>
    <property type="project" value="RGD"/>
</dbReference>
<dbReference type="GO" id="GO:0005886">
    <property type="term" value="C:plasma membrane"/>
    <property type="evidence" value="ECO:0000250"/>
    <property type="project" value="UniProtKB"/>
</dbReference>
<dbReference type="GO" id="GO:0042101">
    <property type="term" value="C:T cell receptor complex"/>
    <property type="evidence" value="ECO:0000266"/>
    <property type="project" value="RGD"/>
</dbReference>
<dbReference type="GO" id="GO:0042802">
    <property type="term" value="F:identical protein binding"/>
    <property type="evidence" value="ECO:0000266"/>
    <property type="project" value="RGD"/>
</dbReference>
<dbReference type="GO" id="GO:0002250">
    <property type="term" value="P:adaptive immune response"/>
    <property type="evidence" value="ECO:0007669"/>
    <property type="project" value="UniProtKB-KW"/>
</dbReference>
<dbReference type="GO" id="GO:0048846">
    <property type="term" value="P:axon extension involved in axon guidance"/>
    <property type="evidence" value="ECO:0000250"/>
    <property type="project" value="UniProtKB"/>
</dbReference>
<dbReference type="GO" id="GO:0007411">
    <property type="term" value="P:axon guidance"/>
    <property type="evidence" value="ECO:0000266"/>
    <property type="project" value="RGD"/>
</dbReference>
<dbReference type="GO" id="GO:0007155">
    <property type="term" value="P:cell adhesion"/>
    <property type="evidence" value="ECO:0000250"/>
    <property type="project" value="UniProtKB"/>
</dbReference>
<dbReference type="GO" id="GO:0007157">
    <property type="term" value="P:heterophilic cell-cell adhesion via plasma membrane cell adhesion molecules"/>
    <property type="evidence" value="ECO:0000250"/>
    <property type="project" value="UniProtKB"/>
</dbReference>
<dbReference type="GO" id="GO:0008045">
    <property type="term" value="P:motor neuron axon guidance"/>
    <property type="evidence" value="ECO:0000266"/>
    <property type="project" value="RGD"/>
</dbReference>
<dbReference type="GO" id="GO:1990138">
    <property type="term" value="P:neuron projection extension"/>
    <property type="evidence" value="ECO:0000250"/>
    <property type="project" value="UniProtKB"/>
</dbReference>
<dbReference type="GO" id="GO:0031290">
    <property type="term" value="P:retinal ganglion cell axon guidance"/>
    <property type="evidence" value="ECO:0000250"/>
    <property type="project" value="UniProtKB"/>
</dbReference>
<dbReference type="CDD" id="cd00096">
    <property type="entry name" value="Ig"/>
    <property type="match status" value="2"/>
</dbReference>
<dbReference type="CDD" id="cd00098">
    <property type="entry name" value="IgC1"/>
    <property type="match status" value="1"/>
</dbReference>
<dbReference type="FunFam" id="2.60.40.10:FF:001428">
    <property type="entry name" value="CD166 antigen"/>
    <property type="match status" value="1"/>
</dbReference>
<dbReference type="FunFam" id="2.60.40.10:FF:000351">
    <property type="entry name" value="CD166 antigen isoform X1"/>
    <property type="match status" value="1"/>
</dbReference>
<dbReference type="FunFam" id="2.60.40.10:FF:000383">
    <property type="entry name" value="CD166 antigen isoform X1"/>
    <property type="match status" value="1"/>
</dbReference>
<dbReference type="FunFam" id="2.60.40.10:FF:000384">
    <property type="entry name" value="CD166 antigen isoform X1"/>
    <property type="match status" value="1"/>
</dbReference>
<dbReference type="FunFam" id="2.60.40.10:FF:000472">
    <property type="entry name" value="CD166 antigen isoform X2"/>
    <property type="match status" value="1"/>
</dbReference>
<dbReference type="Gene3D" id="2.60.40.10">
    <property type="entry name" value="Immunoglobulins"/>
    <property type="match status" value="5"/>
</dbReference>
<dbReference type="InterPro" id="IPR013162">
    <property type="entry name" value="CD80_C2-set"/>
</dbReference>
<dbReference type="InterPro" id="IPR007110">
    <property type="entry name" value="Ig-like_dom"/>
</dbReference>
<dbReference type="InterPro" id="IPR036179">
    <property type="entry name" value="Ig-like_dom_sf"/>
</dbReference>
<dbReference type="InterPro" id="IPR013783">
    <property type="entry name" value="Ig-like_fold"/>
</dbReference>
<dbReference type="InterPro" id="IPR003599">
    <property type="entry name" value="Ig_sub"/>
</dbReference>
<dbReference type="InterPro" id="IPR051116">
    <property type="entry name" value="Surface_Rcpt/Adhesion_Mol"/>
</dbReference>
<dbReference type="PANTHER" id="PTHR11973:SF2">
    <property type="entry name" value="CD166 ANTIGEN"/>
    <property type="match status" value="1"/>
</dbReference>
<dbReference type="PANTHER" id="PTHR11973">
    <property type="entry name" value="CELL SURFACE GLYCOPROTEIN MUC18-RELATED"/>
    <property type="match status" value="1"/>
</dbReference>
<dbReference type="Pfam" id="PF08205">
    <property type="entry name" value="C2-set_2"/>
    <property type="match status" value="1"/>
</dbReference>
<dbReference type="Pfam" id="PF13927">
    <property type="entry name" value="Ig_3"/>
    <property type="match status" value="1"/>
</dbReference>
<dbReference type="SMART" id="SM00409">
    <property type="entry name" value="IG"/>
    <property type="match status" value="3"/>
</dbReference>
<dbReference type="SUPFAM" id="SSF48726">
    <property type="entry name" value="Immunoglobulin"/>
    <property type="match status" value="4"/>
</dbReference>
<dbReference type="PROSITE" id="PS50835">
    <property type="entry name" value="IG_LIKE"/>
    <property type="match status" value="4"/>
</dbReference>
<proteinExistence type="evidence at protein level"/>